<reference key="1">
    <citation type="journal article" date="2003" name="Nat. Biotechnol.">
        <title>The genome sequence of the entomopathogenic bacterium Photorhabdus luminescens.</title>
        <authorList>
            <person name="Duchaud E."/>
            <person name="Rusniok C."/>
            <person name="Frangeul L."/>
            <person name="Buchrieser C."/>
            <person name="Givaudan A."/>
            <person name="Taourit S."/>
            <person name="Bocs S."/>
            <person name="Boursaux-Eude C."/>
            <person name="Chandler M."/>
            <person name="Charles J.-F."/>
            <person name="Dassa E."/>
            <person name="Derose R."/>
            <person name="Derzelle S."/>
            <person name="Freyssinet G."/>
            <person name="Gaudriault S."/>
            <person name="Medigue C."/>
            <person name="Lanois A."/>
            <person name="Powell K."/>
            <person name="Siguier P."/>
            <person name="Vincent R."/>
            <person name="Wingate V."/>
            <person name="Zouine M."/>
            <person name="Glaser P."/>
            <person name="Boemare N."/>
            <person name="Danchin A."/>
            <person name="Kunst F."/>
        </authorList>
    </citation>
    <scope>NUCLEOTIDE SEQUENCE [LARGE SCALE GENOMIC DNA]</scope>
    <source>
        <strain>DSM 15139 / CIP 105565 / TT01</strain>
    </source>
</reference>
<protein>
    <recommendedName>
        <fullName evidence="1">Flap endonuclease Xni</fullName>
        <shortName evidence="1">FEN</shortName>
        <ecNumber evidence="1">3.1.-.-</ecNumber>
    </recommendedName>
</protein>
<dbReference type="EC" id="3.1.-.-" evidence="1"/>
<dbReference type="EMBL" id="BX571861">
    <property type="protein sequence ID" value="CAE12955.1"/>
    <property type="molecule type" value="Genomic_DNA"/>
</dbReference>
<dbReference type="RefSeq" id="WP_011145036.1">
    <property type="nucleotide sequence ID" value="NC_005126.1"/>
</dbReference>
<dbReference type="SMR" id="Q7N8Q9"/>
<dbReference type="STRING" id="243265.plu0660"/>
<dbReference type="GeneID" id="48846948"/>
<dbReference type="KEGG" id="plu:plu0660"/>
<dbReference type="eggNOG" id="COG0258">
    <property type="taxonomic scope" value="Bacteria"/>
</dbReference>
<dbReference type="HOGENOM" id="CLU_004675_1_2_6"/>
<dbReference type="OrthoDB" id="8070997at2"/>
<dbReference type="Proteomes" id="UP000002514">
    <property type="component" value="Chromosome"/>
</dbReference>
<dbReference type="GO" id="GO:0008409">
    <property type="term" value="F:5'-3' exonuclease activity"/>
    <property type="evidence" value="ECO:0007669"/>
    <property type="project" value="InterPro"/>
</dbReference>
<dbReference type="GO" id="GO:0017108">
    <property type="term" value="F:5'-flap endonuclease activity"/>
    <property type="evidence" value="ECO:0007669"/>
    <property type="project" value="UniProtKB-UniRule"/>
</dbReference>
<dbReference type="GO" id="GO:0003677">
    <property type="term" value="F:DNA binding"/>
    <property type="evidence" value="ECO:0007669"/>
    <property type="project" value="UniProtKB-UniRule"/>
</dbReference>
<dbReference type="GO" id="GO:0000287">
    <property type="term" value="F:magnesium ion binding"/>
    <property type="evidence" value="ECO:0007669"/>
    <property type="project" value="UniProtKB-UniRule"/>
</dbReference>
<dbReference type="GO" id="GO:0030955">
    <property type="term" value="F:potassium ion binding"/>
    <property type="evidence" value="ECO:0007669"/>
    <property type="project" value="UniProtKB-UniRule"/>
</dbReference>
<dbReference type="GO" id="GO:0033567">
    <property type="term" value="P:DNA replication, Okazaki fragment processing"/>
    <property type="evidence" value="ECO:0007669"/>
    <property type="project" value="UniProtKB-UniRule"/>
</dbReference>
<dbReference type="CDD" id="cd09898">
    <property type="entry name" value="H3TH_53EXO"/>
    <property type="match status" value="1"/>
</dbReference>
<dbReference type="CDD" id="cd09859">
    <property type="entry name" value="PIN_53EXO"/>
    <property type="match status" value="1"/>
</dbReference>
<dbReference type="FunFam" id="1.10.150.20:FF:000003">
    <property type="entry name" value="DNA polymerase I"/>
    <property type="match status" value="1"/>
</dbReference>
<dbReference type="FunFam" id="3.40.50.1010:FF:000011">
    <property type="entry name" value="Flap endonuclease Xni"/>
    <property type="match status" value="1"/>
</dbReference>
<dbReference type="Gene3D" id="1.10.150.20">
    <property type="entry name" value="5' to 3' exonuclease, C-terminal subdomain"/>
    <property type="match status" value="1"/>
</dbReference>
<dbReference type="Gene3D" id="3.40.50.1010">
    <property type="entry name" value="5'-nuclease"/>
    <property type="match status" value="1"/>
</dbReference>
<dbReference type="HAMAP" id="MF_01192">
    <property type="entry name" value="Xni"/>
    <property type="match status" value="1"/>
</dbReference>
<dbReference type="InterPro" id="IPR020046">
    <property type="entry name" value="5-3_exonucl_a-hlix_arch_N"/>
</dbReference>
<dbReference type="InterPro" id="IPR002421">
    <property type="entry name" value="5-3_exonuclease"/>
</dbReference>
<dbReference type="InterPro" id="IPR036279">
    <property type="entry name" value="5-3_exonuclease_C_sf"/>
</dbReference>
<dbReference type="InterPro" id="IPR020045">
    <property type="entry name" value="DNA_polI_H3TH"/>
</dbReference>
<dbReference type="InterPro" id="IPR038969">
    <property type="entry name" value="FEN"/>
</dbReference>
<dbReference type="InterPro" id="IPR008918">
    <property type="entry name" value="HhH2"/>
</dbReference>
<dbReference type="InterPro" id="IPR029060">
    <property type="entry name" value="PIN-like_dom_sf"/>
</dbReference>
<dbReference type="InterPro" id="IPR022895">
    <property type="entry name" value="Xni"/>
</dbReference>
<dbReference type="NCBIfam" id="NF007017">
    <property type="entry name" value="PRK09482.1"/>
    <property type="match status" value="1"/>
</dbReference>
<dbReference type="PANTHER" id="PTHR42646:SF2">
    <property type="entry name" value="5'-3' EXONUCLEASE FAMILY PROTEIN"/>
    <property type="match status" value="1"/>
</dbReference>
<dbReference type="PANTHER" id="PTHR42646">
    <property type="entry name" value="FLAP ENDONUCLEASE XNI"/>
    <property type="match status" value="1"/>
</dbReference>
<dbReference type="Pfam" id="PF01367">
    <property type="entry name" value="5_3_exonuc"/>
    <property type="match status" value="1"/>
</dbReference>
<dbReference type="Pfam" id="PF02739">
    <property type="entry name" value="5_3_exonuc_N"/>
    <property type="match status" value="1"/>
</dbReference>
<dbReference type="SMART" id="SM00475">
    <property type="entry name" value="53EXOc"/>
    <property type="match status" value="1"/>
</dbReference>
<dbReference type="SMART" id="SM00279">
    <property type="entry name" value="HhH2"/>
    <property type="match status" value="1"/>
</dbReference>
<dbReference type="SUPFAM" id="SSF47807">
    <property type="entry name" value="5' to 3' exonuclease, C-terminal subdomain"/>
    <property type="match status" value="1"/>
</dbReference>
<dbReference type="SUPFAM" id="SSF88723">
    <property type="entry name" value="PIN domain-like"/>
    <property type="match status" value="1"/>
</dbReference>
<sequence length="252" mass="28350">MIHLLIVDALNLIRRIHAVQGSPCIPACEHALRQLIQHSHPTHAVAVFDEENRNHSWRHQILPDYKAGRSPMPDNLQQEMPQIRASFEQQGVTCWHAKGHEADDLAATLAVKVTAAGHNVTIVSTDKGYCQLLSPNIRIRDYFQKRWLDMPFVQQEFGVLPEQLPDYWGLAGISSSKIPGIQGIGPKTAATLLQQAGTLDNLFQHLDQQPEKWRNKLESNQEIAFISREVASLRTDLALKGNLQQLRLTIAT</sequence>
<evidence type="ECO:0000255" key="1">
    <source>
        <dbReference type="HAMAP-Rule" id="MF_01192"/>
    </source>
</evidence>
<feature type="chain" id="PRO_0000297866" description="Flap endonuclease Xni">
    <location>
        <begin position="1"/>
        <end position="252"/>
    </location>
</feature>
<feature type="domain" description="5'-3' exonuclease" evidence="1">
    <location>
        <begin position="159"/>
        <end position="248"/>
    </location>
</feature>
<feature type="region of interest" description="Interaction with DNA" evidence="1">
    <location>
        <begin position="183"/>
        <end position="188"/>
    </location>
</feature>
<feature type="binding site" evidence="1">
    <location>
        <position position="103"/>
    </location>
    <ligand>
        <name>Mg(2+)</name>
        <dbReference type="ChEBI" id="CHEBI:18420"/>
    </ligand>
</feature>
<feature type="binding site" evidence="1">
    <location>
        <position position="170"/>
    </location>
    <ligand>
        <name>K(+)</name>
        <dbReference type="ChEBI" id="CHEBI:29103"/>
    </ligand>
</feature>
<feature type="binding site" evidence="1">
    <location>
        <position position="171"/>
    </location>
    <ligand>
        <name>K(+)</name>
        <dbReference type="ChEBI" id="CHEBI:29103"/>
    </ligand>
</feature>
<feature type="binding site" evidence="1">
    <location>
        <position position="179"/>
    </location>
    <ligand>
        <name>K(+)</name>
        <dbReference type="ChEBI" id="CHEBI:29103"/>
    </ligand>
</feature>
<feature type="binding site" evidence="1">
    <location>
        <position position="181"/>
    </location>
    <ligand>
        <name>K(+)</name>
        <dbReference type="ChEBI" id="CHEBI:29103"/>
    </ligand>
</feature>
<feature type="binding site" evidence="1">
    <location>
        <position position="184"/>
    </location>
    <ligand>
        <name>K(+)</name>
        <dbReference type="ChEBI" id="CHEBI:29103"/>
    </ligand>
</feature>
<accession>Q7N8Q9</accession>
<proteinExistence type="inferred from homology"/>
<gene>
    <name evidence="1" type="primary">xni</name>
    <name evidence="1" type="synonym">ygdG</name>
    <name type="ordered locus">plu0660</name>
</gene>
<organism>
    <name type="scientific">Photorhabdus laumondii subsp. laumondii (strain DSM 15139 / CIP 105565 / TT01)</name>
    <name type="common">Photorhabdus luminescens subsp. laumondii</name>
    <dbReference type="NCBI Taxonomy" id="243265"/>
    <lineage>
        <taxon>Bacteria</taxon>
        <taxon>Pseudomonadati</taxon>
        <taxon>Pseudomonadota</taxon>
        <taxon>Gammaproteobacteria</taxon>
        <taxon>Enterobacterales</taxon>
        <taxon>Morganellaceae</taxon>
        <taxon>Photorhabdus</taxon>
    </lineage>
</organism>
<keyword id="KW-0238">DNA-binding</keyword>
<keyword id="KW-0255">Endonuclease</keyword>
<keyword id="KW-0378">Hydrolase</keyword>
<keyword id="KW-0460">Magnesium</keyword>
<keyword id="KW-0479">Metal-binding</keyword>
<keyword id="KW-0540">Nuclease</keyword>
<keyword id="KW-0630">Potassium</keyword>
<keyword id="KW-1185">Reference proteome</keyword>
<name>XNI_PHOLL</name>
<comment type="function">
    <text evidence="1">Has flap endonuclease activity. During DNA replication, flap endonucleases cleave the 5'-overhanging flap structure that is generated by displacement synthesis when DNA polymerase encounters the 5'-end of a downstream Okazaki fragment.</text>
</comment>
<comment type="cofactor">
    <cofactor evidence="1">
        <name>Mg(2+)</name>
        <dbReference type="ChEBI" id="CHEBI:18420"/>
    </cofactor>
    <text evidence="1">Binds 2 Mg(2+) per subunit. Only one magnesium ion has a direct interaction with the protein, the other interactions are indirect.</text>
</comment>
<comment type="cofactor">
    <cofactor evidence="1">
        <name>K(+)</name>
        <dbReference type="ChEBI" id="CHEBI:29103"/>
    </cofactor>
    <text evidence="1">Binds 1 K(+) per subunit. The potassium ion strongly increases the affinity for DNA.</text>
</comment>
<comment type="similarity">
    <text evidence="1">Belongs to the Xni family.</text>
</comment>